<keyword id="KW-0408">Iron</keyword>
<keyword id="KW-0479">Metal-binding</keyword>
<keyword id="KW-0560">Oxidoreductase</keyword>
<keyword id="KW-1185">Reference proteome</keyword>
<feature type="chain" id="PRO_0000418025" description="Flavonol synthase 3">
    <location>
        <begin position="1"/>
        <end position="308"/>
    </location>
</feature>
<feature type="domain" description="Fe2OG dioxygenase" evidence="2">
    <location>
        <begin position="167"/>
        <end position="267"/>
    </location>
</feature>
<feature type="binding site" evidence="1">
    <location>
        <begin position="175"/>
        <end position="177"/>
    </location>
    <ligand>
        <name>2-oxoglutarate</name>
        <dbReference type="ChEBI" id="CHEBI:16810"/>
    </ligand>
</feature>
<feature type="binding site" evidence="1 2">
    <location>
        <position position="192"/>
    </location>
    <ligand>
        <name>Fe cation</name>
        <dbReference type="ChEBI" id="CHEBI:24875"/>
        <note>catalytic</note>
    </ligand>
</feature>
<feature type="binding site" evidence="1 2">
    <location>
        <position position="194"/>
    </location>
    <ligand>
        <name>Fe cation</name>
        <dbReference type="ChEBI" id="CHEBI:24875"/>
        <note>catalytic</note>
    </ligand>
</feature>
<feature type="binding site" evidence="1 2">
    <location>
        <position position="248"/>
    </location>
    <ligand>
        <name>Fe cation</name>
        <dbReference type="ChEBI" id="CHEBI:24875"/>
        <note>catalytic</note>
    </ligand>
</feature>
<feature type="binding site" evidence="1">
    <location>
        <begin position="258"/>
        <end position="260"/>
    </location>
    <ligand>
        <name>2-oxoglutarate</name>
        <dbReference type="ChEBI" id="CHEBI:16810"/>
    </ligand>
</feature>
<feature type="sequence conflict" description="In Ref. 4; AAM63319." evidence="7" ref="4">
    <original>D</original>
    <variation>Y</variation>
    <location>
        <position position="93"/>
    </location>
</feature>
<protein>
    <recommendedName>
        <fullName evidence="6">Flavonol synthase 3</fullName>
        <shortName evidence="6">AtFLS3</shortName>
        <ecNumber evidence="5">1.14.20.6</ecNumber>
    </recommendedName>
</protein>
<comment type="function">
    <text evidence="4 5">Catalyzes the formation of flavonols from dihydroflavonols. Possesses low activity in vitro towards dihydrokaempferol and dihydroquercetin producing kaempferol and quercitin, respectively.</text>
</comment>
<comment type="catalytic activity">
    <reaction evidence="5">
        <text>a (2R,3R)-dihydroflavonol + 2-oxoglutarate + O2 = a flavonol + succinate + CO2 + H2O</text>
        <dbReference type="Rhea" id="RHEA:21088"/>
        <dbReference type="ChEBI" id="CHEBI:15377"/>
        <dbReference type="ChEBI" id="CHEBI:15379"/>
        <dbReference type="ChEBI" id="CHEBI:16526"/>
        <dbReference type="ChEBI" id="CHEBI:16810"/>
        <dbReference type="ChEBI" id="CHEBI:28802"/>
        <dbReference type="ChEBI" id="CHEBI:30031"/>
        <dbReference type="ChEBI" id="CHEBI:138188"/>
        <dbReference type="EC" id="1.14.20.6"/>
    </reaction>
    <physiologicalReaction direction="left-to-right" evidence="5">
        <dbReference type="Rhea" id="RHEA:21089"/>
    </physiologicalReaction>
</comment>
<comment type="cofactor">
    <cofactor evidence="2">
        <name>Fe(2+)</name>
        <dbReference type="ChEBI" id="CHEBI:29033"/>
    </cofactor>
    <text evidence="2">Binds 1 Fe(2+) ion per subunit.</text>
</comment>
<comment type="pathway">
    <text evidence="5">Secondary metabolite biosynthesis; flavonoid biosynthesis.</text>
</comment>
<comment type="tissue specificity">
    <text evidence="3">Widely expressed at low levels.</text>
</comment>
<comment type="disruption phenotype">
    <text evidence="3 4">No visible phenotype under normal growth conditions.</text>
</comment>
<comment type="similarity">
    <text evidence="7">Belongs to the iron/ascorbate-dependent oxidoreductase family.</text>
</comment>
<accession>Q9FFQ5</accession>
<accession>Q8LDA5</accession>
<name>FLS3_ARATH</name>
<gene>
    <name evidence="6" type="primary">FLS3</name>
    <name evidence="8" type="ordered locus">At5g63590</name>
    <name evidence="9" type="ORF">MBK5.5</name>
</gene>
<organism>
    <name type="scientific">Arabidopsis thaliana</name>
    <name type="common">Mouse-ear cress</name>
    <dbReference type="NCBI Taxonomy" id="3702"/>
    <lineage>
        <taxon>Eukaryota</taxon>
        <taxon>Viridiplantae</taxon>
        <taxon>Streptophyta</taxon>
        <taxon>Embryophyta</taxon>
        <taxon>Tracheophyta</taxon>
        <taxon>Spermatophyta</taxon>
        <taxon>Magnoliopsida</taxon>
        <taxon>eudicotyledons</taxon>
        <taxon>Gunneridae</taxon>
        <taxon>Pentapetalae</taxon>
        <taxon>rosids</taxon>
        <taxon>malvids</taxon>
        <taxon>Brassicales</taxon>
        <taxon>Brassicaceae</taxon>
        <taxon>Camelineae</taxon>
        <taxon>Arabidopsis</taxon>
    </lineage>
</organism>
<evidence type="ECO:0000250" key="1">
    <source>
        <dbReference type="UniProtKB" id="Q96323"/>
    </source>
</evidence>
<evidence type="ECO:0000255" key="2">
    <source>
        <dbReference type="PROSITE-ProRule" id="PRU00805"/>
    </source>
</evidence>
<evidence type="ECO:0000269" key="3">
    <source>
    </source>
</evidence>
<evidence type="ECO:0000269" key="4">
    <source>
    </source>
</evidence>
<evidence type="ECO:0000269" key="5">
    <source>
    </source>
</evidence>
<evidence type="ECO:0000303" key="6">
    <source>
    </source>
</evidence>
<evidence type="ECO:0000305" key="7"/>
<evidence type="ECO:0000312" key="8">
    <source>
        <dbReference type="Araport" id="AT5G63590"/>
    </source>
</evidence>
<evidence type="ECO:0000312" key="9">
    <source>
        <dbReference type="EMBL" id="BAB10452.1"/>
    </source>
</evidence>
<reference key="1">
    <citation type="journal article" date="1997" name="DNA Res.">
        <title>Structural analysis of Arabidopsis thaliana chromosome 5. I. Sequence features of the 1.6 Mb regions covered by twenty physically assigned P1 clones.</title>
        <authorList>
            <person name="Sato S."/>
            <person name="Kotani H."/>
            <person name="Nakamura Y."/>
            <person name="Kaneko T."/>
            <person name="Asamizu E."/>
            <person name="Fukami M."/>
            <person name="Miyajima N."/>
            <person name="Tabata S."/>
        </authorList>
    </citation>
    <scope>NUCLEOTIDE SEQUENCE [LARGE SCALE GENOMIC DNA]</scope>
    <source>
        <strain>cv. Columbia</strain>
    </source>
</reference>
<reference key="2">
    <citation type="journal article" date="2017" name="Plant J.">
        <title>Araport11: a complete reannotation of the Arabidopsis thaliana reference genome.</title>
        <authorList>
            <person name="Cheng C.Y."/>
            <person name="Krishnakumar V."/>
            <person name="Chan A.P."/>
            <person name="Thibaud-Nissen F."/>
            <person name="Schobel S."/>
            <person name="Town C.D."/>
        </authorList>
    </citation>
    <scope>GENOME REANNOTATION</scope>
    <source>
        <strain>cv. Columbia</strain>
    </source>
</reference>
<reference key="3">
    <citation type="journal article" date="2003" name="Science">
        <title>Empirical analysis of transcriptional activity in the Arabidopsis genome.</title>
        <authorList>
            <person name="Yamada K."/>
            <person name="Lim J."/>
            <person name="Dale J.M."/>
            <person name="Chen H."/>
            <person name="Shinn P."/>
            <person name="Palm C.J."/>
            <person name="Southwick A.M."/>
            <person name="Wu H.C."/>
            <person name="Kim C.J."/>
            <person name="Nguyen M."/>
            <person name="Pham P.K."/>
            <person name="Cheuk R.F."/>
            <person name="Karlin-Newmann G."/>
            <person name="Liu S.X."/>
            <person name="Lam B."/>
            <person name="Sakano H."/>
            <person name="Wu T."/>
            <person name="Yu G."/>
            <person name="Miranda M."/>
            <person name="Quach H.L."/>
            <person name="Tripp M."/>
            <person name="Chang C.H."/>
            <person name="Lee J.M."/>
            <person name="Toriumi M.J."/>
            <person name="Chan M.M."/>
            <person name="Tang C.C."/>
            <person name="Onodera C.S."/>
            <person name="Deng J.M."/>
            <person name="Akiyama K."/>
            <person name="Ansari Y."/>
            <person name="Arakawa T."/>
            <person name="Banh J."/>
            <person name="Banno F."/>
            <person name="Bowser L."/>
            <person name="Brooks S.Y."/>
            <person name="Carninci P."/>
            <person name="Chao Q."/>
            <person name="Choy N."/>
            <person name="Enju A."/>
            <person name="Goldsmith A.D."/>
            <person name="Gurjal M."/>
            <person name="Hansen N.F."/>
            <person name="Hayashizaki Y."/>
            <person name="Johnson-Hopson C."/>
            <person name="Hsuan V.W."/>
            <person name="Iida K."/>
            <person name="Karnes M."/>
            <person name="Khan S."/>
            <person name="Koesema E."/>
            <person name="Ishida J."/>
            <person name="Jiang P.X."/>
            <person name="Jones T."/>
            <person name="Kawai J."/>
            <person name="Kamiya A."/>
            <person name="Meyers C."/>
            <person name="Nakajima M."/>
            <person name="Narusaka M."/>
            <person name="Seki M."/>
            <person name="Sakurai T."/>
            <person name="Satou M."/>
            <person name="Tamse R."/>
            <person name="Vaysberg M."/>
            <person name="Wallender E.K."/>
            <person name="Wong C."/>
            <person name="Yamamura Y."/>
            <person name="Yuan S."/>
            <person name="Shinozaki K."/>
            <person name="Davis R.W."/>
            <person name="Theologis A."/>
            <person name="Ecker J.R."/>
        </authorList>
    </citation>
    <scope>NUCLEOTIDE SEQUENCE [LARGE SCALE MRNA]</scope>
    <source>
        <strain>cv. Columbia</strain>
    </source>
</reference>
<reference key="4">
    <citation type="submission" date="2002-03" db="EMBL/GenBank/DDBJ databases">
        <title>Full-length cDNA from Arabidopsis thaliana.</title>
        <authorList>
            <person name="Brover V.V."/>
            <person name="Troukhan M.E."/>
            <person name="Alexandrov N.A."/>
            <person name="Lu Y.-P."/>
            <person name="Flavell R.B."/>
            <person name="Feldmann K.A."/>
        </authorList>
    </citation>
    <scope>NUCLEOTIDE SEQUENCE [LARGE SCALE MRNA]</scope>
</reference>
<reference key="5">
    <citation type="submission" date="2006-07" db="EMBL/GenBank/DDBJ databases">
        <title>Large-scale analysis of RIKEN Arabidopsis full-length (RAFL) cDNAs.</title>
        <authorList>
            <person name="Totoki Y."/>
            <person name="Seki M."/>
            <person name="Ishida J."/>
            <person name="Nakajima M."/>
            <person name="Enju A."/>
            <person name="Kamiya A."/>
            <person name="Narusaka M."/>
            <person name="Shin-i T."/>
            <person name="Nakagawa M."/>
            <person name="Sakamoto N."/>
            <person name="Oishi K."/>
            <person name="Kohara Y."/>
            <person name="Kobayashi M."/>
            <person name="Toyoda A."/>
            <person name="Sakaki Y."/>
            <person name="Sakurai T."/>
            <person name="Iida K."/>
            <person name="Akiyama K."/>
            <person name="Satou M."/>
            <person name="Toyoda T."/>
            <person name="Konagaya A."/>
            <person name="Carninci P."/>
            <person name="Kawai J."/>
            <person name="Hayashizaki Y."/>
            <person name="Shinozaki K."/>
        </authorList>
    </citation>
    <scope>NUCLEOTIDE SEQUENCE [LARGE SCALE MRNA]</scope>
    <source>
        <strain>cv. Columbia</strain>
    </source>
</reference>
<reference key="6">
    <citation type="journal article" date="2008" name="Plant Physiol.">
        <title>Functional analysis of a predicted flavonol synthase gene family in Arabidopsis.</title>
        <authorList>
            <person name="Owens D.K."/>
            <person name="Alerding A.B."/>
            <person name="Crosby K.C."/>
            <person name="Bandara A.B."/>
            <person name="Westwood J.H."/>
            <person name="Winkel B.S."/>
        </authorList>
    </citation>
    <scope>TISSUE SPECIFICITY</scope>
    <scope>GENE FAMILY</scope>
    <scope>NOMENCLATURE</scope>
    <scope>DISRUPTION PHENOTYPE</scope>
    <source>
        <strain>cv. Columbia</strain>
    </source>
</reference>
<reference key="7">
    <citation type="journal article" date="2009" name="FEBS Lett.">
        <title>Arabidopsis thaliana expresses a second functional flavonol synthase.</title>
        <authorList>
            <person name="Preuss A."/>
            <person name="Stracke R."/>
            <person name="Weisshaar B."/>
            <person name="Hillebrecht A."/>
            <person name="Matern U."/>
            <person name="Martens S."/>
        </authorList>
    </citation>
    <scope>FUNCTION</scope>
    <scope>CATALYTIC ACTIVITY</scope>
    <scope>PATHWAY</scope>
</reference>
<reference key="8">
    <citation type="journal article" date="2009" name="Planta">
        <title>Metabolomic and genetic analyses of flavonol synthesis in Arabidopsis thaliana support the in vivo involvement of leucoanthocyanidin dioxygenase.</title>
        <authorList>
            <person name="Stracke R."/>
            <person name="De Vos R.C."/>
            <person name="Bartelniewoehner L."/>
            <person name="Ishihara H."/>
            <person name="Sagasser M."/>
            <person name="Martens S."/>
            <person name="Weisshaar B."/>
        </authorList>
    </citation>
    <scope>FUNCTION</scope>
    <scope>DISRUPTION PHENOTYPE</scope>
    <source>
        <strain>cv. No-0</strain>
    </source>
</reference>
<reference key="9">
    <citation type="journal article" date="2013" name="Plant Physiol. Biochem.">
        <title>The flavonoid biosynthetic pathway in Arabidopsis: Structural and genetic diversity.</title>
        <authorList>
            <person name="Saito K."/>
            <person name="Yonekura-Sakakibara K."/>
            <person name="Nakabayashi R."/>
            <person name="Higashi Y."/>
            <person name="Yamazaki M."/>
            <person name="Tohge T."/>
            <person name="Fernie A.R."/>
        </authorList>
    </citation>
    <scope>REVIEW</scope>
    <scope>NOMENCLATURE</scope>
</reference>
<sequence length="308" mass="35452">MEMEKNQHISSLDIPVIDLSNPDEELVASAVVKASQEWGIFQVVNHGIPTELILRLLQVGMEFFELPETEKEAVAKPEDSLDIEGYRTKYQKDLEGRNAWVDHLFHRIWPPSRVNHKFWPKNPPEYIEVNEEYASHIKKLSEKIMEWLSEGLGLRHEALKEGLGGETIEYLMKINYYPPCPDPELVVGAPDHTDVNGITLLVANEALGLQAFKDNQWIDAEYTTSGIIVIIGDQFLRMSNGKYKSVEHRAKMDKEKTRISWPVFVESSLDQVFGPLPELITGDENVPKFKPYVYKDYKFRKLKKLLLD</sequence>
<dbReference type="EC" id="1.14.20.6" evidence="5"/>
<dbReference type="EMBL" id="AB005234">
    <property type="protein sequence ID" value="BAB10452.1"/>
    <property type="molecule type" value="Genomic_DNA"/>
</dbReference>
<dbReference type="EMBL" id="CP002688">
    <property type="protein sequence ID" value="AED97772.1"/>
    <property type="molecule type" value="Genomic_DNA"/>
</dbReference>
<dbReference type="EMBL" id="BT003134">
    <property type="protein sequence ID" value="AAO24566.1"/>
    <property type="molecule type" value="mRNA"/>
</dbReference>
<dbReference type="EMBL" id="AK228300">
    <property type="protein sequence ID" value="BAF00243.1"/>
    <property type="molecule type" value="mRNA"/>
</dbReference>
<dbReference type="EMBL" id="AY086112">
    <property type="protein sequence ID" value="AAM63319.1"/>
    <property type="molecule type" value="mRNA"/>
</dbReference>
<dbReference type="RefSeq" id="NP_201164.1">
    <property type="nucleotide sequence ID" value="NM_125754.3"/>
</dbReference>
<dbReference type="SMR" id="Q9FFQ5"/>
<dbReference type="BioGRID" id="21720">
    <property type="interactions" value="1"/>
</dbReference>
<dbReference type="FunCoup" id="Q9FFQ5">
    <property type="interactions" value="24"/>
</dbReference>
<dbReference type="IntAct" id="Q9FFQ5">
    <property type="interactions" value="1"/>
</dbReference>
<dbReference type="STRING" id="3702.Q9FFQ5"/>
<dbReference type="PaxDb" id="3702-AT5G63590.1"/>
<dbReference type="ProteomicsDB" id="230628"/>
<dbReference type="EnsemblPlants" id="AT5G63590.1">
    <property type="protein sequence ID" value="AT5G63590.1"/>
    <property type="gene ID" value="AT5G63590"/>
</dbReference>
<dbReference type="GeneID" id="836478"/>
<dbReference type="Gramene" id="AT5G63590.1">
    <property type="protein sequence ID" value="AT5G63590.1"/>
    <property type="gene ID" value="AT5G63590"/>
</dbReference>
<dbReference type="KEGG" id="ath:AT5G63590"/>
<dbReference type="Araport" id="AT5G63590"/>
<dbReference type="TAIR" id="AT5G63590">
    <property type="gene designation" value="FLS3"/>
</dbReference>
<dbReference type="eggNOG" id="KOG0143">
    <property type="taxonomic scope" value="Eukaryota"/>
</dbReference>
<dbReference type="HOGENOM" id="CLU_010119_16_2_1"/>
<dbReference type="InParanoid" id="Q9FFQ5"/>
<dbReference type="OMA" id="HWIDVKY"/>
<dbReference type="PhylomeDB" id="Q9FFQ5"/>
<dbReference type="BRENDA" id="1.14.20.6">
    <property type="organism ID" value="399"/>
</dbReference>
<dbReference type="UniPathway" id="UPA00154"/>
<dbReference type="PRO" id="PR:Q9FFQ5"/>
<dbReference type="Proteomes" id="UP000006548">
    <property type="component" value="Chromosome 5"/>
</dbReference>
<dbReference type="ExpressionAtlas" id="Q9FFQ5">
    <property type="expression patterns" value="baseline and differential"/>
</dbReference>
<dbReference type="GO" id="GO:0045431">
    <property type="term" value="F:flavonol synthase activity"/>
    <property type="evidence" value="ECO:0000314"/>
    <property type="project" value="UniProtKB"/>
</dbReference>
<dbReference type="GO" id="GO:0046872">
    <property type="term" value="F:metal ion binding"/>
    <property type="evidence" value="ECO:0007669"/>
    <property type="project" value="UniProtKB-KW"/>
</dbReference>
<dbReference type="GO" id="GO:0009813">
    <property type="term" value="P:flavonoid biosynthetic process"/>
    <property type="evidence" value="ECO:0000250"/>
    <property type="project" value="TAIR"/>
</dbReference>
<dbReference type="GO" id="GO:0009416">
    <property type="term" value="P:response to light stimulus"/>
    <property type="evidence" value="ECO:0000270"/>
    <property type="project" value="TAIR"/>
</dbReference>
<dbReference type="Gene3D" id="2.60.120.330">
    <property type="entry name" value="B-lactam Antibiotic, Isopenicillin N Synthase, Chain"/>
    <property type="match status" value="1"/>
</dbReference>
<dbReference type="InterPro" id="IPR026992">
    <property type="entry name" value="DIOX_N"/>
</dbReference>
<dbReference type="InterPro" id="IPR044861">
    <property type="entry name" value="IPNS-like_FE2OG_OXY"/>
</dbReference>
<dbReference type="InterPro" id="IPR027443">
    <property type="entry name" value="IPNS-like_sf"/>
</dbReference>
<dbReference type="InterPro" id="IPR005123">
    <property type="entry name" value="Oxoglu/Fe-dep_dioxygenase_dom"/>
</dbReference>
<dbReference type="InterPro" id="IPR050295">
    <property type="entry name" value="Plant_2OG-oxidoreductases"/>
</dbReference>
<dbReference type="PANTHER" id="PTHR47991">
    <property type="entry name" value="OXOGLUTARATE/IRON-DEPENDENT DIOXYGENASE"/>
    <property type="match status" value="1"/>
</dbReference>
<dbReference type="Pfam" id="PF03171">
    <property type="entry name" value="2OG-FeII_Oxy"/>
    <property type="match status" value="1"/>
</dbReference>
<dbReference type="Pfam" id="PF14226">
    <property type="entry name" value="DIOX_N"/>
    <property type="match status" value="1"/>
</dbReference>
<dbReference type="SUPFAM" id="SSF51197">
    <property type="entry name" value="Clavaminate synthase-like"/>
    <property type="match status" value="1"/>
</dbReference>
<dbReference type="PROSITE" id="PS51471">
    <property type="entry name" value="FE2OG_OXY"/>
    <property type="match status" value="1"/>
</dbReference>
<proteinExistence type="evidence at protein level"/>